<evidence type="ECO:0000255" key="1">
    <source>
        <dbReference type="PROSITE-ProRule" id="PRU00024"/>
    </source>
</evidence>
<evidence type="ECO:0000269" key="2">
    <source>
    </source>
</evidence>
<evidence type="ECO:0000303" key="3">
    <source>
    </source>
</evidence>
<evidence type="ECO:0000303" key="4">
    <source>
    </source>
</evidence>
<evidence type="ECO:0000305" key="5"/>
<evidence type="ECO:0000312" key="6">
    <source>
        <dbReference type="Araport" id="AT4G15248"/>
    </source>
</evidence>
<protein>
    <recommendedName>
        <fullName evidence="3">B-box domain protein 30</fullName>
        <shortName evidence="3">AtBBX30</shortName>
    </recommendedName>
    <alternativeName>
        <fullName evidence="4">Microprotein 1A</fullName>
    </alternativeName>
</protein>
<name>MIP1A_ARATH</name>
<dbReference type="EMBL" id="AL117321">
    <property type="status" value="NOT_ANNOTATED_CDS"/>
    <property type="molecule type" value="Genomic_DNA"/>
</dbReference>
<dbReference type="EMBL" id="CP002687">
    <property type="protein sequence ID" value="AEE83576.1"/>
    <property type="molecule type" value="Genomic_DNA"/>
</dbReference>
<dbReference type="EMBL" id="DQ487602">
    <property type="protein sequence ID" value="ABF59389.1"/>
    <property type="molecule type" value="Genomic_DNA"/>
</dbReference>
<dbReference type="RefSeq" id="NP_001031645.1">
    <property type="nucleotide sequence ID" value="NM_001036568.3"/>
</dbReference>
<dbReference type="SMR" id="Q1G3I2"/>
<dbReference type="FunCoup" id="Q1G3I2">
    <property type="interactions" value="2"/>
</dbReference>
<dbReference type="IntAct" id="Q1G3I2">
    <property type="interactions" value="20"/>
</dbReference>
<dbReference type="STRING" id="3702.Q1G3I2"/>
<dbReference type="PaxDb" id="3702-AT4G15248.1"/>
<dbReference type="EnsemblPlants" id="AT4G15248.1">
    <property type="protein sequence ID" value="AT4G15248.1"/>
    <property type="gene ID" value="AT4G15248"/>
</dbReference>
<dbReference type="GeneID" id="3769879"/>
<dbReference type="Gramene" id="AT4G15248.1">
    <property type="protein sequence ID" value="AT4G15248.1"/>
    <property type="gene ID" value="AT4G15248"/>
</dbReference>
<dbReference type="KEGG" id="ath:AT4G15248"/>
<dbReference type="Araport" id="AT4G15248"/>
<dbReference type="TAIR" id="AT4G15248">
    <property type="gene designation" value="BBX30"/>
</dbReference>
<dbReference type="eggNOG" id="ENOG502S3MI">
    <property type="taxonomic scope" value="Eukaryota"/>
</dbReference>
<dbReference type="HOGENOM" id="CLU_159621_0_0_1"/>
<dbReference type="InParanoid" id="Q1G3I2"/>
<dbReference type="OMA" id="SCARIVK"/>
<dbReference type="PhylomeDB" id="Q1G3I2"/>
<dbReference type="PRO" id="PR:Q1G3I2"/>
<dbReference type="Proteomes" id="UP000006548">
    <property type="component" value="Chromosome 4"/>
</dbReference>
<dbReference type="ExpressionAtlas" id="Q1G3I2">
    <property type="expression patterns" value="baseline and differential"/>
</dbReference>
<dbReference type="GO" id="GO:0005634">
    <property type="term" value="C:nucleus"/>
    <property type="evidence" value="ECO:0000314"/>
    <property type="project" value="UniProtKB"/>
</dbReference>
<dbReference type="GO" id="GO:0030674">
    <property type="term" value="F:protein-macromolecule adaptor activity"/>
    <property type="evidence" value="ECO:0000314"/>
    <property type="project" value="UniProtKB"/>
</dbReference>
<dbReference type="GO" id="GO:0008270">
    <property type="term" value="F:zinc ion binding"/>
    <property type="evidence" value="ECO:0007669"/>
    <property type="project" value="UniProtKB-KW"/>
</dbReference>
<dbReference type="GO" id="GO:0007623">
    <property type="term" value="P:circadian rhythm"/>
    <property type="evidence" value="ECO:0000270"/>
    <property type="project" value="UniProtKB"/>
</dbReference>
<dbReference type="GO" id="GO:0009909">
    <property type="term" value="P:regulation of flower development"/>
    <property type="evidence" value="ECO:0000315"/>
    <property type="project" value="UniProtKB"/>
</dbReference>
<dbReference type="CDD" id="cd19821">
    <property type="entry name" value="Bbox1_BBX-like"/>
    <property type="match status" value="1"/>
</dbReference>
<dbReference type="InterPro" id="IPR049808">
    <property type="entry name" value="CONSTANS-like_Bbox1"/>
</dbReference>
<dbReference type="InterPro" id="IPR000315">
    <property type="entry name" value="Znf_B-box"/>
</dbReference>
<dbReference type="PANTHER" id="PTHR31717:SF142">
    <property type="entry name" value="B-BOX DOMAIN PROTEIN 30-RELATED"/>
    <property type="match status" value="1"/>
</dbReference>
<dbReference type="PANTHER" id="PTHR31717">
    <property type="entry name" value="ZINC FINGER PROTEIN CONSTANS-LIKE 10"/>
    <property type="match status" value="1"/>
</dbReference>
<dbReference type="Pfam" id="PF00643">
    <property type="entry name" value="zf-B_box"/>
    <property type="match status" value="1"/>
</dbReference>
<dbReference type="SMART" id="SM00336">
    <property type="entry name" value="BBOX"/>
    <property type="match status" value="1"/>
</dbReference>
<dbReference type="PROSITE" id="PS50119">
    <property type="entry name" value="ZF_BBOX"/>
    <property type="match status" value="1"/>
</dbReference>
<proteinExistence type="evidence at protein level"/>
<comment type="function">
    <text evidence="2">Developmental regulator acting by forming heterodimeric complexes, that sequester CO and CO-like (COL) proteins into non-functional complexes. Engages CO and the transcriptional repressor TPL in a tripartite complex. Involved in the CO-mediated long-day flowering-promotion pathway.</text>
</comment>
<comment type="subunit">
    <text evidence="2">Interacts with CO (via B-box) and with TPL (via PFVFL motif).</text>
</comment>
<comment type="interaction">
    <interactant intactId="EBI-15191905">
        <id>Q1G3I2</id>
    </interactant>
    <interactant intactId="EBI-15191913">
        <id>O23379</id>
        <label>COL11</label>
    </interactant>
    <organismsDiffer>false</organismsDiffer>
    <experiments>3</experiments>
</comment>
<comment type="interaction">
    <interactant intactId="EBI-15191905">
        <id>Q1G3I2</id>
    </interactant>
    <interactant intactId="EBI-15197469">
        <id>Q9SSE5</id>
        <label>COL9</label>
    </interactant>
    <organismsDiffer>false</organismsDiffer>
    <experiments>3</experiments>
</comment>
<comment type="interaction">
    <interactant intactId="EBI-15191905">
        <id>Q1G3I2</id>
    </interactant>
    <interactant intactId="EBI-15191903">
        <id>P93007</id>
        <label>ERF112</label>
    </interactant>
    <organismsDiffer>false</organismsDiffer>
    <experiments>4</experiments>
</comment>
<comment type="interaction">
    <interactant intactId="EBI-15191905">
        <id>Q1G3I2</id>
    </interactant>
    <interactant intactId="EBI-15193003">
        <id>Q1G3Q4</id>
        <label>RITF1</label>
    </interactant>
    <organismsDiffer>false</organismsDiffer>
    <experiments>3</experiments>
</comment>
<comment type="subcellular location">
    <subcellularLocation>
        <location evidence="2">Nucleus</location>
    </subcellularLocation>
</comment>
<comment type="tissue specificity">
    <text evidence="2">Highly expressed in shoot apical meristems and in vascular tissues of leaves. Also detected in petioles.</text>
</comment>
<comment type="induction">
    <text evidence="2">Circadian-regulation. Peak of expression toward the end of the dark period in both long day and short day photoperiods.</text>
</comment>
<comment type="domain">
    <text evidence="2">The PFVFL motif is required for interaction with TPL.</text>
</comment>
<keyword id="KW-0479">Metal-binding</keyword>
<keyword id="KW-0539">Nucleus</keyword>
<keyword id="KW-1185">Reference proteome</keyword>
<keyword id="KW-0862">Zinc</keyword>
<keyword id="KW-0863">Zinc-finger</keyword>
<feature type="chain" id="PRO_0000436350" description="B-box domain protein 30">
    <location>
        <begin position="1"/>
        <end position="117"/>
    </location>
</feature>
<feature type="zinc finger region" description="B box-type; atypical" evidence="1">
    <location>
        <begin position="27"/>
        <end position="73"/>
    </location>
</feature>
<feature type="short sequence motif" description="PFVFL" evidence="5">
    <location>
        <begin position="113"/>
        <end position="117"/>
    </location>
</feature>
<feature type="binding site" evidence="1">
    <location>
        <position position="32"/>
    </location>
    <ligand>
        <name>Zn(2+)</name>
        <dbReference type="ChEBI" id="CHEBI:29105"/>
    </ligand>
</feature>
<feature type="binding site" evidence="1">
    <location>
        <position position="35"/>
    </location>
    <ligand>
        <name>Zn(2+)</name>
        <dbReference type="ChEBI" id="CHEBI:29105"/>
    </ligand>
</feature>
<feature type="binding site" evidence="1">
    <location>
        <position position="54"/>
    </location>
    <ligand>
        <name>Zn(2+)</name>
        <dbReference type="ChEBI" id="CHEBI:29105"/>
    </ligand>
</feature>
<feature type="binding site" evidence="1">
    <location>
        <position position="59"/>
    </location>
    <ligand>
        <name>Zn(2+)</name>
        <dbReference type="ChEBI" id="CHEBI:29105"/>
    </ligand>
</feature>
<feature type="mutagenesis site" description="In miP1a*; loss of interaction with CO, but no effect on interaction with TPL; when associated with A-35, A-43, A-51, A-54, A-59 and A-68." evidence="2">
    <original>C</original>
    <variation>A</variation>
    <location>
        <position position="32"/>
    </location>
</feature>
<feature type="mutagenesis site" description="In miP1a*; loss of interaction with CO, but no effect on interaction with TPL; when associated with A-32, A-43, A-51, A-54, A-59 and A-68." evidence="2">
    <original>C</original>
    <variation>A</variation>
    <location>
        <position position="35"/>
    </location>
</feature>
<feature type="mutagenesis site" description="In miP1a*; loss of interaction with CO, but no effect on interaction with TPL; when associated with A-32, A-35, A-51, A-54, A-59 and A-68." evidence="2">
    <original>C</original>
    <variation>A</variation>
    <location>
        <position position="43"/>
    </location>
</feature>
<feature type="mutagenesis site" description="In miP1a*; loss of interaction with CO, but no effect on interaction with TPL; when associated with A-32, A-35, A-43, A-54, A-59 and A-68." evidence="2">
    <original>C</original>
    <variation>A</variation>
    <location>
        <position position="51"/>
    </location>
</feature>
<feature type="mutagenesis site" description="In miP1a*; loss of interaction with CO, but no effect on interaction with TPL; when associated with A-32, A-35, A-43, A-51, A-59 and A-68." evidence="2">
    <original>C</original>
    <variation>A</variation>
    <location>
        <position position="54"/>
    </location>
</feature>
<feature type="mutagenesis site" description="In miP1a*; loss of interaction with CO, but no effect on interaction with TPL; when associated with A-32, A-35, A-43, A-51, A-54 and A-68." evidence="2">
    <original>H</original>
    <variation>A</variation>
    <location>
        <position position="59"/>
    </location>
</feature>
<feature type="mutagenesis site" description="In miP1a*; loss of interaction with CO, but no effect on interaction with TPL; when associated with A-32, A-35, A-43, A-51, A-54 and A-59." evidence="2">
    <original>H</original>
    <variation>A</variation>
    <location>
        <position position="68"/>
    </location>
</feature>
<feature type="mutagenesis site" description="Loss of interaction with TPL." evidence="2">
    <location>
        <begin position="113"/>
        <end position="117"/>
    </location>
</feature>
<sequence length="117" mass="13562">MCRGFEKEEERRSDNGGCQRLCTESHKAPVSCELCGENATVYCEADAAFLCRKCDRWVHSANFLARRHLRRVICTTCRKLTRRCLVGDNFNVVLPEIRMIARIEEHSSDHKIPFVFL</sequence>
<reference key="1">
    <citation type="journal article" date="1999" name="Nature">
        <title>Sequence and analysis of chromosome 4 of the plant Arabidopsis thaliana.</title>
        <authorList>
            <person name="Mayer K.F.X."/>
            <person name="Schueller C."/>
            <person name="Wambutt R."/>
            <person name="Murphy G."/>
            <person name="Volckaert G."/>
            <person name="Pohl T."/>
            <person name="Duesterhoeft A."/>
            <person name="Stiekema W."/>
            <person name="Entian K.-D."/>
            <person name="Terryn N."/>
            <person name="Harris B."/>
            <person name="Ansorge W."/>
            <person name="Brandt P."/>
            <person name="Grivell L.A."/>
            <person name="Rieger M."/>
            <person name="Weichselgartner M."/>
            <person name="de Simone V."/>
            <person name="Obermaier B."/>
            <person name="Mache R."/>
            <person name="Mueller M."/>
            <person name="Kreis M."/>
            <person name="Delseny M."/>
            <person name="Puigdomenech P."/>
            <person name="Watson M."/>
            <person name="Schmidtheini T."/>
            <person name="Reichert B."/>
            <person name="Portetelle D."/>
            <person name="Perez-Alonso M."/>
            <person name="Boutry M."/>
            <person name="Bancroft I."/>
            <person name="Vos P."/>
            <person name="Hoheisel J."/>
            <person name="Zimmermann W."/>
            <person name="Wedler H."/>
            <person name="Ridley P."/>
            <person name="Langham S.-A."/>
            <person name="McCullagh B."/>
            <person name="Bilham L."/>
            <person name="Robben J."/>
            <person name="van der Schueren J."/>
            <person name="Grymonprez B."/>
            <person name="Chuang Y.-J."/>
            <person name="Vandenbussche F."/>
            <person name="Braeken M."/>
            <person name="Weltjens I."/>
            <person name="Voet M."/>
            <person name="Bastiaens I."/>
            <person name="Aert R."/>
            <person name="Defoor E."/>
            <person name="Weitzenegger T."/>
            <person name="Bothe G."/>
            <person name="Ramsperger U."/>
            <person name="Hilbert H."/>
            <person name="Braun M."/>
            <person name="Holzer E."/>
            <person name="Brandt A."/>
            <person name="Peters S."/>
            <person name="van Staveren M."/>
            <person name="Dirkse W."/>
            <person name="Mooijman P."/>
            <person name="Klein Lankhorst R."/>
            <person name="Rose M."/>
            <person name="Hauf J."/>
            <person name="Koetter P."/>
            <person name="Berneiser S."/>
            <person name="Hempel S."/>
            <person name="Feldpausch M."/>
            <person name="Lamberth S."/>
            <person name="Van den Daele H."/>
            <person name="De Keyser A."/>
            <person name="Buysshaert C."/>
            <person name="Gielen J."/>
            <person name="Villarroel R."/>
            <person name="De Clercq R."/>
            <person name="van Montagu M."/>
            <person name="Rogers J."/>
            <person name="Cronin A."/>
            <person name="Quail M.A."/>
            <person name="Bray-Allen S."/>
            <person name="Clark L."/>
            <person name="Doggett J."/>
            <person name="Hall S."/>
            <person name="Kay M."/>
            <person name="Lennard N."/>
            <person name="McLay K."/>
            <person name="Mayes R."/>
            <person name="Pettett A."/>
            <person name="Rajandream M.A."/>
            <person name="Lyne M."/>
            <person name="Benes V."/>
            <person name="Rechmann S."/>
            <person name="Borkova D."/>
            <person name="Bloecker H."/>
            <person name="Scharfe M."/>
            <person name="Grimm M."/>
            <person name="Loehnert T.-H."/>
            <person name="Dose S."/>
            <person name="de Haan M."/>
            <person name="Maarse A.C."/>
            <person name="Schaefer M."/>
            <person name="Mueller-Auer S."/>
            <person name="Gabel C."/>
            <person name="Fuchs M."/>
            <person name="Fartmann B."/>
            <person name="Granderath K."/>
            <person name="Dauner D."/>
            <person name="Herzl A."/>
            <person name="Neumann S."/>
            <person name="Argiriou A."/>
            <person name="Vitale D."/>
            <person name="Liguori R."/>
            <person name="Piravandi E."/>
            <person name="Massenet O."/>
            <person name="Quigley F."/>
            <person name="Clabauld G."/>
            <person name="Muendlein A."/>
            <person name="Felber R."/>
            <person name="Schnabl S."/>
            <person name="Hiller R."/>
            <person name="Schmidt W."/>
            <person name="Lecharny A."/>
            <person name="Aubourg S."/>
            <person name="Chefdor F."/>
            <person name="Cooke R."/>
            <person name="Berger C."/>
            <person name="Monfort A."/>
            <person name="Casacuberta E."/>
            <person name="Gibbons T."/>
            <person name="Weber N."/>
            <person name="Vandenbol M."/>
            <person name="Bargues M."/>
            <person name="Terol J."/>
            <person name="Torres A."/>
            <person name="Perez-Perez A."/>
            <person name="Purnelle B."/>
            <person name="Bent E."/>
            <person name="Johnson S."/>
            <person name="Tacon D."/>
            <person name="Jesse T."/>
            <person name="Heijnen L."/>
            <person name="Schwarz S."/>
            <person name="Scholler P."/>
            <person name="Heber S."/>
            <person name="Francs P."/>
            <person name="Bielke C."/>
            <person name="Frishman D."/>
            <person name="Haase D."/>
            <person name="Lemcke K."/>
            <person name="Mewes H.-W."/>
            <person name="Stocker S."/>
            <person name="Zaccaria P."/>
            <person name="Bevan M."/>
            <person name="Wilson R.K."/>
            <person name="de la Bastide M."/>
            <person name="Habermann K."/>
            <person name="Parnell L."/>
            <person name="Dedhia N."/>
            <person name="Gnoj L."/>
            <person name="Schutz K."/>
            <person name="Huang E."/>
            <person name="Spiegel L."/>
            <person name="Sekhon M."/>
            <person name="Murray J."/>
            <person name="Sheet P."/>
            <person name="Cordes M."/>
            <person name="Abu-Threideh J."/>
            <person name="Stoneking T."/>
            <person name="Kalicki J."/>
            <person name="Graves T."/>
            <person name="Harmon G."/>
            <person name="Edwards J."/>
            <person name="Latreille P."/>
            <person name="Courtney L."/>
            <person name="Cloud J."/>
            <person name="Abbott A."/>
            <person name="Scott K."/>
            <person name="Johnson D."/>
            <person name="Minx P."/>
            <person name="Bentley D."/>
            <person name="Fulton B."/>
            <person name="Miller N."/>
            <person name="Greco T."/>
            <person name="Kemp K."/>
            <person name="Kramer J."/>
            <person name="Fulton L."/>
            <person name="Mardis E."/>
            <person name="Dante M."/>
            <person name="Pepin K."/>
            <person name="Hillier L.W."/>
            <person name="Nelson J."/>
            <person name="Spieth J."/>
            <person name="Ryan E."/>
            <person name="Andrews S."/>
            <person name="Geisel C."/>
            <person name="Layman D."/>
            <person name="Du H."/>
            <person name="Ali J."/>
            <person name="Berghoff A."/>
            <person name="Jones K."/>
            <person name="Drone K."/>
            <person name="Cotton M."/>
            <person name="Joshu C."/>
            <person name="Antonoiu B."/>
            <person name="Zidanic M."/>
            <person name="Strong C."/>
            <person name="Sun H."/>
            <person name="Lamar B."/>
            <person name="Yordan C."/>
            <person name="Ma P."/>
            <person name="Zhong J."/>
            <person name="Preston R."/>
            <person name="Vil D."/>
            <person name="Shekher M."/>
            <person name="Matero A."/>
            <person name="Shah R."/>
            <person name="Swaby I.K."/>
            <person name="O'Shaughnessy A."/>
            <person name="Rodriguez M."/>
            <person name="Hoffman J."/>
            <person name="Till S."/>
            <person name="Granat S."/>
            <person name="Shohdy N."/>
            <person name="Hasegawa A."/>
            <person name="Hameed A."/>
            <person name="Lodhi M."/>
            <person name="Johnson A."/>
            <person name="Chen E."/>
            <person name="Marra M.A."/>
            <person name="Martienssen R."/>
            <person name="McCombie W.R."/>
        </authorList>
    </citation>
    <scope>NUCLEOTIDE SEQUENCE [LARGE SCALE GENOMIC DNA]</scope>
    <source>
        <strain>cv. Columbia</strain>
    </source>
</reference>
<reference key="2">
    <citation type="journal article" date="2017" name="Plant J.">
        <title>Araport11: a complete reannotation of the Arabidopsis thaliana reference genome.</title>
        <authorList>
            <person name="Cheng C.Y."/>
            <person name="Krishnakumar V."/>
            <person name="Chan A.P."/>
            <person name="Thibaud-Nissen F."/>
            <person name="Schobel S."/>
            <person name="Town C.D."/>
        </authorList>
    </citation>
    <scope>GENOME REANNOTATION</scope>
    <source>
        <strain>cv. Columbia</strain>
    </source>
</reference>
<reference key="3">
    <citation type="journal article" date="2006" name="Plant Biotechnol. J.">
        <title>Simultaneous high-throughput recombinational cloning of open reading frames in closed and open configurations.</title>
        <authorList>
            <person name="Underwood B.A."/>
            <person name="Vanderhaeghen R."/>
            <person name="Whitford R."/>
            <person name="Town C.D."/>
            <person name="Hilson P."/>
        </authorList>
    </citation>
    <scope>NUCLEOTIDE SEQUENCE [LARGE SCALE GENOMIC DNA]</scope>
    <source>
        <strain>cv. Columbia</strain>
    </source>
</reference>
<reference key="4">
    <citation type="journal article" date="2009" name="Plant Cell">
        <title>The Arabidopsis B-box zinc finger family.</title>
        <authorList>
            <person name="Khanna R."/>
            <person name="Kronmiller B."/>
            <person name="Maszle D.R."/>
            <person name="Coupland G."/>
            <person name="Holm M."/>
            <person name="Mizuno T."/>
            <person name="Wu S.H."/>
        </authorList>
    </citation>
    <scope>GENE FAMILY</scope>
    <scope>NOMENCLATURE</scope>
</reference>
<reference key="5">
    <citation type="journal article" date="2016" name="PLoS Genet.">
        <title>Microprotein-mediated recruitment of CONSTANS into a TOPLESS trimeric complex represses flowering in Arabidopsis.</title>
        <authorList>
            <person name="Graeff M."/>
            <person name="Straub D."/>
            <person name="Eguen T."/>
            <person name="Dolde U."/>
            <person name="Rodrigues V."/>
            <person name="Brandt R."/>
            <person name="Wenkel S."/>
        </authorList>
    </citation>
    <scope>FUNCTION</scope>
    <scope>3D-STRUCTURE MODELING</scope>
    <scope>INTERACTION WITH CO AND TPL</scope>
    <scope>MUTAGENESIS OF CYS-32; CYS-35; CYS-43; CYS-51; CYS-54; HIS-59; HIS-68 AND 113-PRO--LEU-117</scope>
    <scope>SUBCELLULAR LOCATION</scope>
    <scope>INDUCTION</scope>
    <scope>TISSUE SPECIFICITY</scope>
    <scope>DOMAIN</scope>
</reference>
<organism>
    <name type="scientific">Arabidopsis thaliana</name>
    <name type="common">Mouse-ear cress</name>
    <dbReference type="NCBI Taxonomy" id="3702"/>
    <lineage>
        <taxon>Eukaryota</taxon>
        <taxon>Viridiplantae</taxon>
        <taxon>Streptophyta</taxon>
        <taxon>Embryophyta</taxon>
        <taxon>Tracheophyta</taxon>
        <taxon>Spermatophyta</taxon>
        <taxon>Magnoliopsida</taxon>
        <taxon>eudicotyledons</taxon>
        <taxon>Gunneridae</taxon>
        <taxon>Pentapetalae</taxon>
        <taxon>rosids</taxon>
        <taxon>malvids</taxon>
        <taxon>Brassicales</taxon>
        <taxon>Brassicaceae</taxon>
        <taxon>Camelineae</taxon>
        <taxon>Arabidopsis</taxon>
    </lineage>
</organism>
<accession>Q1G3I2</accession>
<gene>
    <name evidence="4" type="primary">MIP1A</name>
    <name evidence="3" type="synonym">BBX30</name>
    <name evidence="6" type="ordered locus">At4g15248</name>
</gene>